<name>LEUC_ANADF</name>
<evidence type="ECO:0000255" key="1">
    <source>
        <dbReference type="HAMAP-Rule" id="MF_01026"/>
    </source>
</evidence>
<comment type="function">
    <text evidence="1">Catalyzes the isomerization between 2-isopropylmalate and 3-isopropylmalate, via the formation of 2-isopropylmaleate.</text>
</comment>
<comment type="catalytic activity">
    <reaction evidence="1">
        <text>(2R,3S)-3-isopropylmalate = (2S)-2-isopropylmalate</text>
        <dbReference type="Rhea" id="RHEA:32287"/>
        <dbReference type="ChEBI" id="CHEBI:1178"/>
        <dbReference type="ChEBI" id="CHEBI:35121"/>
        <dbReference type="EC" id="4.2.1.33"/>
    </reaction>
</comment>
<comment type="cofactor">
    <cofactor evidence="1">
        <name>[4Fe-4S] cluster</name>
        <dbReference type="ChEBI" id="CHEBI:49883"/>
    </cofactor>
    <text evidence="1">Binds 1 [4Fe-4S] cluster per subunit.</text>
</comment>
<comment type="pathway">
    <text evidence="1">Amino-acid biosynthesis; L-leucine biosynthesis; L-leucine from 3-methyl-2-oxobutanoate: step 2/4.</text>
</comment>
<comment type="subunit">
    <text evidence="1">Heterodimer of LeuC and LeuD.</text>
</comment>
<comment type="similarity">
    <text evidence="1">Belongs to the aconitase/IPM isomerase family. LeuC type 1 subfamily.</text>
</comment>
<reference key="1">
    <citation type="journal article" date="2015" name="Genome Announc.">
        <title>Complete genome sequence of Anaeromyxobacter sp. Fw109-5, an anaerobic, metal-reducing bacterium isolated from a contaminated subsurface environment.</title>
        <authorList>
            <person name="Hwang C."/>
            <person name="Copeland A."/>
            <person name="Lucas S."/>
            <person name="Lapidus A."/>
            <person name="Barry K."/>
            <person name="Glavina Del Rio T."/>
            <person name="Dalin E."/>
            <person name="Tice H."/>
            <person name="Pitluck S."/>
            <person name="Sims D."/>
            <person name="Brettin T."/>
            <person name="Bruce D.C."/>
            <person name="Detter J.C."/>
            <person name="Han C.S."/>
            <person name="Schmutz J."/>
            <person name="Larimer F.W."/>
            <person name="Land M.L."/>
            <person name="Hauser L.J."/>
            <person name="Kyrpides N."/>
            <person name="Lykidis A."/>
            <person name="Richardson P."/>
            <person name="Belieav A."/>
            <person name="Sanford R.A."/>
            <person name="Loeffler F.E."/>
            <person name="Fields M.W."/>
        </authorList>
    </citation>
    <scope>NUCLEOTIDE SEQUENCE [LARGE SCALE GENOMIC DNA]</scope>
    <source>
        <strain>Fw109-5</strain>
    </source>
</reference>
<sequence length="478" mass="50911">MSATDPRPARTLFEKVWDAHVVRAETPETPAVLYIDLHLMHEVTSPQAFSMLRERGLKVRRPDRTLATTDHSTPTLPRLPDGRWPFFDAQNEAQVAQIEKNARDFGVELHGLGDPQQGVVHVFGPEMGATQPGMTVVCGDSHTATHGAFGALAFGIGTSEVGHVLATQCLLQRKPRSLAIRVDGALQPGVTAKDLILAIIAQIGVGGGTGHVMEFTGPAVRALTMEGRMTLCNMAIEGGARAGMIAPDDVTFQWLAGKPRVPQGAAFDAAVARWRELPTDAGARYDREVTVDVSRLEPMVTFGTNPAQGIPVTGRIPDPGAEKDPSARATLESALRYMALAPGKPILGQKVDVVFVGSCTNGRLEDLREAARVMRGRKVKTRTLVVAGSHAVKKAAEAEGLDRIFREAGAEWREPGCSMCLAMNGDMLEPGQYCVSTSNRNFEGRQGPGGRTLLASPATAAAAAVSGAVADPRRLVEG</sequence>
<gene>
    <name evidence="1" type="primary">leuC</name>
    <name type="ordered locus">Anae109_1875</name>
</gene>
<dbReference type="EC" id="4.2.1.33" evidence="1"/>
<dbReference type="EMBL" id="CP000769">
    <property type="protein sequence ID" value="ABS26078.1"/>
    <property type="molecule type" value="Genomic_DNA"/>
</dbReference>
<dbReference type="RefSeq" id="WP_012096656.1">
    <property type="nucleotide sequence ID" value="NC_009675.1"/>
</dbReference>
<dbReference type="SMR" id="A7HBI2"/>
<dbReference type="STRING" id="404589.Anae109_1875"/>
<dbReference type="KEGG" id="afw:Anae109_1875"/>
<dbReference type="eggNOG" id="COG0065">
    <property type="taxonomic scope" value="Bacteria"/>
</dbReference>
<dbReference type="HOGENOM" id="CLU_006714_3_4_7"/>
<dbReference type="OrthoDB" id="9764318at2"/>
<dbReference type="UniPathway" id="UPA00048">
    <property type="reaction ID" value="UER00071"/>
</dbReference>
<dbReference type="Proteomes" id="UP000006382">
    <property type="component" value="Chromosome"/>
</dbReference>
<dbReference type="GO" id="GO:0003861">
    <property type="term" value="F:3-isopropylmalate dehydratase activity"/>
    <property type="evidence" value="ECO:0007669"/>
    <property type="project" value="UniProtKB-UniRule"/>
</dbReference>
<dbReference type="GO" id="GO:0051539">
    <property type="term" value="F:4 iron, 4 sulfur cluster binding"/>
    <property type="evidence" value="ECO:0007669"/>
    <property type="project" value="UniProtKB-KW"/>
</dbReference>
<dbReference type="GO" id="GO:0046872">
    <property type="term" value="F:metal ion binding"/>
    <property type="evidence" value="ECO:0007669"/>
    <property type="project" value="UniProtKB-KW"/>
</dbReference>
<dbReference type="GO" id="GO:0009098">
    <property type="term" value="P:L-leucine biosynthetic process"/>
    <property type="evidence" value="ECO:0007669"/>
    <property type="project" value="UniProtKB-UniRule"/>
</dbReference>
<dbReference type="CDD" id="cd01583">
    <property type="entry name" value="IPMI"/>
    <property type="match status" value="1"/>
</dbReference>
<dbReference type="Gene3D" id="3.30.499.10">
    <property type="entry name" value="Aconitase, domain 3"/>
    <property type="match status" value="2"/>
</dbReference>
<dbReference type="HAMAP" id="MF_01026">
    <property type="entry name" value="LeuC_type1"/>
    <property type="match status" value="1"/>
</dbReference>
<dbReference type="InterPro" id="IPR004430">
    <property type="entry name" value="3-IsopropMal_deHydase_lsu"/>
</dbReference>
<dbReference type="InterPro" id="IPR015931">
    <property type="entry name" value="Acnase/IPM_dHydase_lsu_aba_1/3"/>
</dbReference>
<dbReference type="InterPro" id="IPR001030">
    <property type="entry name" value="Acoase/IPM_deHydtase_lsu_aba"/>
</dbReference>
<dbReference type="InterPro" id="IPR018136">
    <property type="entry name" value="Aconitase_4Fe-4S_BS"/>
</dbReference>
<dbReference type="InterPro" id="IPR036008">
    <property type="entry name" value="Aconitase_4Fe-4S_dom"/>
</dbReference>
<dbReference type="InterPro" id="IPR050067">
    <property type="entry name" value="IPM_dehydratase_rel_enz"/>
</dbReference>
<dbReference type="InterPro" id="IPR033941">
    <property type="entry name" value="IPMI_cat"/>
</dbReference>
<dbReference type="NCBIfam" id="TIGR00170">
    <property type="entry name" value="leuC"/>
    <property type="match status" value="1"/>
</dbReference>
<dbReference type="NCBIfam" id="NF004016">
    <property type="entry name" value="PRK05478.1"/>
    <property type="match status" value="1"/>
</dbReference>
<dbReference type="NCBIfam" id="NF009116">
    <property type="entry name" value="PRK12466.1"/>
    <property type="match status" value="1"/>
</dbReference>
<dbReference type="PANTHER" id="PTHR43822:SF9">
    <property type="entry name" value="3-ISOPROPYLMALATE DEHYDRATASE"/>
    <property type="match status" value="1"/>
</dbReference>
<dbReference type="PANTHER" id="PTHR43822">
    <property type="entry name" value="HOMOACONITASE, MITOCHONDRIAL-RELATED"/>
    <property type="match status" value="1"/>
</dbReference>
<dbReference type="Pfam" id="PF00330">
    <property type="entry name" value="Aconitase"/>
    <property type="match status" value="1"/>
</dbReference>
<dbReference type="PRINTS" id="PR00415">
    <property type="entry name" value="ACONITASE"/>
</dbReference>
<dbReference type="SUPFAM" id="SSF53732">
    <property type="entry name" value="Aconitase iron-sulfur domain"/>
    <property type="match status" value="1"/>
</dbReference>
<dbReference type="PROSITE" id="PS00450">
    <property type="entry name" value="ACONITASE_1"/>
    <property type="match status" value="1"/>
</dbReference>
<dbReference type="PROSITE" id="PS01244">
    <property type="entry name" value="ACONITASE_2"/>
    <property type="match status" value="1"/>
</dbReference>
<feature type="chain" id="PRO_0000319809" description="3-isopropylmalate dehydratase large subunit">
    <location>
        <begin position="1"/>
        <end position="478"/>
    </location>
</feature>
<feature type="binding site" evidence="1">
    <location>
        <position position="359"/>
    </location>
    <ligand>
        <name>[4Fe-4S] cluster</name>
        <dbReference type="ChEBI" id="CHEBI:49883"/>
    </ligand>
</feature>
<feature type="binding site" evidence="1">
    <location>
        <position position="417"/>
    </location>
    <ligand>
        <name>[4Fe-4S] cluster</name>
        <dbReference type="ChEBI" id="CHEBI:49883"/>
    </ligand>
</feature>
<feature type="binding site" evidence="1">
    <location>
        <position position="420"/>
    </location>
    <ligand>
        <name>[4Fe-4S] cluster</name>
        <dbReference type="ChEBI" id="CHEBI:49883"/>
    </ligand>
</feature>
<protein>
    <recommendedName>
        <fullName evidence="1">3-isopropylmalate dehydratase large subunit</fullName>
        <ecNumber evidence="1">4.2.1.33</ecNumber>
    </recommendedName>
    <alternativeName>
        <fullName evidence="1">Alpha-IPM isomerase</fullName>
        <shortName evidence="1">IPMI</shortName>
    </alternativeName>
    <alternativeName>
        <fullName evidence="1">Isopropylmalate isomerase</fullName>
    </alternativeName>
</protein>
<proteinExistence type="inferred from homology"/>
<organism>
    <name type="scientific">Anaeromyxobacter sp. (strain Fw109-5)</name>
    <dbReference type="NCBI Taxonomy" id="404589"/>
    <lineage>
        <taxon>Bacteria</taxon>
        <taxon>Pseudomonadati</taxon>
        <taxon>Myxococcota</taxon>
        <taxon>Myxococcia</taxon>
        <taxon>Myxococcales</taxon>
        <taxon>Cystobacterineae</taxon>
        <taxon>Anaeromyxobacteraceae</taxon>
        <taxon>Anaeromyxobacter</taxon>
    </lineage>
</organism>
<accession>A7HBI2</accession>
<keyword id="KW-0004">4Fe-4S</keyword>
<keyword id="KW-0028">Amino-acid biosynthesis</keyword>
<keyword id="KW-0100">Branched-chain amino acid biosynthesis</keyword>
<keyword id="KW-0408">Iron</keyword>
<keyword id="KW-0411">Iron-sulfur</keyword>
<keyword id="KW-0432">Leucine biosynthesis</keyword>
<keyword id="KW-0456">Lyase</keyword>
<keyword id="KW-0479">Metal-binding</keyword>
<keyword id="KW-1185">Reference proteome</keyword>